<keyword id="KW-0150">Chloroplast</keyword>
<keyword id="KW-0413">Isomerase</keyword>
<keyword id="KW-0460">Magnesium</keyword>
<keyword id="KW-0479">Metal-binding</keyword>
<keyword id="KW-0934">Plastid</keyword>
<keyword id="KW-0809">Transit peptide</keyword>
<reference key="1">
    <citation type="journal article" date="2009" name="Org. Lett.">
        <title>A functional genomics approach to tanshinone biosynthesis provides stereochemical insights.</title>
        <authorList>
            <person name="Gao W."/>
            <person name="Hillwig M.L."/>
            <person name="Huang L."/>
            <person name="Cui G."/>
            <person name="Wang X."/>
            <person name="Kong J."/>
            <person name="Yang B."/>
            <person name="Peters R.J."/>
        </authorList>
    </citation>
    <scope>NUCLEOTIDE SEQUENCE [MRNA]</scope>
    <scope>FUNCTION</scope>
    <scope>CATALYTIC ACTIVITY</scope>
    <scope>INDUCTION BY JASMONATE</scope>
    <source>
        <tissue>Root hair</tissue>
    </source>
</reference>
<reference key="2">
    <citation type="journal article" date="2015" name="Plant Physiol.">
        <title>Functional divergence of diterpene syntheses in the medicinal plant Salvia miltiorrhiza.</title>
        <authorList>
            <person name="Cui G."/>
            <person name="Duan L."/>
            <person name="Jin B."/>
            <person name="Qian J."/>
            <person name="Xue Z."/>
            <person name="Shen G."/>
            <person name="Snyder J.H."/>
            <person name="Song J."/>
            <person name="Chen S."/>
            <person name="Huang L."/>
            <person name="Peters R.J."/>
            <person name="Qi X."/>
        </authorList>
    </citation>
    <scope>NUCLEOTIDE SEQUENCE [MRNA]</scope>
    <scope>FUNCTION</scope>
    <scope>CATALYTIC ACTIVITY</scope>
</reference>
<reference key="3">
    <citation type="journal article" date="2011" name="Mol. Biol. Rep.">
        <title>Candidate genes involved in tanshinone biosynthesis in hairy roots of Salvia miltiorrhiza revealed by cDNA microarray.</title>
        <authorList>
            <person name="Cui G."/>
            <person name="Huang L."/>
            <person name="Tang X."/>
            <person name="Zhao J."/>
        </authorList>
    </citation>
    <scope>FUNCTION</scope>
</reference>
<reference key="4">
    <citation type="journal article" date="2012" name="J. Exp. Bot.">
        <title>Genome-wide identification and characterization of novel genes involved in terpenoid biosynthesis in Salvia miltiorrhiza.</title>
        <authorList>
            <person name="Ma Y."/>
            <person name="Yuan L."/>
            <person name="Wu B."/>
            <person name="Li X."/>
            <person name="Chen S."/>
            <person name="Lu S."/>
        </authorList>
    </citation>
    <scope>INDUCTION BY JASMONATE</scope>
</reference>
<comment type="function">
    <text evidence="5 6 8">Involved in tanshinone biosynthesis in hairy roots (PubMed:19905026, PubMed:21082262, PubMed:26077765). Catalyzes the conversion of geranylgeranyl diphosphate (GGPP) to copalyl diphosphate (CPP) (PubMed:19905026, PubMed:21082262, PubMed:26077765).</text>
</comment>
<comment type="catalytic activity">
    <reaction evidence="5">
        <text>(2E,6E,10E)-geranylgeranyl diphosphate = (+)-copalyl diphosphate</text>
        <dbReference type="Rhea" id="RHEA:24316"/>
        <dbReference type="ChEBI" id="CHEBI:58635"/>
        <dbReference type="ChEBI" id="CHEBI:58756"/>
        <dbReference type="EC" id="5.5.1.12"/>
    </reaction>
    <physiologicalReaction direction="left-to-right" evidence="5">
        <dbReference type="Rhea" id="RHEA:24317"/>
    </physiologicalReaction>
</comment>
<comment type="cofactor">
    <cofactor evidence="3">
        <name>Mg(2+)</name>
        <dbReference type="ChEBI" id="CHEBI:18420"/>
    </cofactor>
</comment>
<comment type="pathway">
    <text evidence="11">Secondary metabolite biosynthesis; terpenoid biosynthesis.</text>
</comment>
<comment type="subcellular location">
    <subcellularLocation>
        <location evidence="4">Plastid</location>
        <location evidence="4">Chloroplast</location>
    </subcellularLocation>
</comment>
<comment type="induction">
    <text evidence="5 7">Induced by jasmonate (MeJA) in roots.</text>
</comment>
<comment type="domain">
    <text evidence="11">The Asp-Xaa-Asp-Asp (DXDD) motif is important for the catalytic activity, presumably through binding to Mg(2+).</text>
</comment>
<comment type="miscellaneous">
    <text evidence="8">Plant silencing CPS1 are impaired in tanshinone biosynthesis in hairy roots (PubMed:26077765). CPS1-silenced plants exhibit an obvious white-color root phenotype compared with wild-type roots, which have the characteristic reddish color associated with tanshinones (PubMed:26077765).</text>
</comment>
<comment type="similarity">
    <text evidence="11">Belongs to the terpene synthase family.</text>
</comment>
<organism>
    <name type="scientific">Salvia miltiorrhiza</name>
    <name type="common">Chinese sage</name>
    <dbReference type="NCBI Taxonomy" id="226208"/>
    <lineage>
        <taxon>Eukaryota</taxon>
        <taxon>Viridiplantae</taxon>
        <taxon>Streptophyta</taxon>
        <taxon>Embryophyta</taxon>
        <taxon>Tracheophyta</taxon>
        <taxon>Spermatophyta</taxon>
        <taxon>Magnoliopsida</taxon>
        <taxon>eudicotyledons</taxon>
        <taxon>Gunneridae</taxon>
        <taxon>Pentapetalae</taxon>
        <taxon>asterids</taxon>
        <taxon>lamiids</taxon>
        <taxon>Lamiales</taxon>
        <taxon>Lamiaceae</taxon>
        <taxon>Nepetoideae</taxon>
        <taxon>Mentheae</taxon>
        <taxon>Salviinae</taxon>
        <taxon>Salvia</taxon>
        <taxon>Salvia incertae sedis</taxon>
    </lineage>
</organism>
<gene>
    <name evidence="10" type="primary">CPS1</name>
    <name evidence="9" type="synonym">CPS</name>
</gene>
<accession>B8PQ84</accession>
<accession>A0A0A7AN31</accession>
<proteinExistence type="evidence at protein level"/>
<name>CPS1_SALMI</name>
<feature type="transit peptide" description="Chloroplast" evidence="4">
    <location>
        <begin position="1"/>
        <end position="59"/>
    </location>
</feature>
<feature type="chain" id="PRO_0000449933" description="Copalyl diphosphate synthase CPS1, chloroplastic">
    <location>
        <begin position="60"/>
        <end position="793"/>
    </location>
</feature>
<feature type="short sequence motif" description="DXDD motif" evidence="11">
    <location>
        <begin position="370"/>
        <end position="373"/>
    </location>
</feature>
<feature type="binding site" evidence="2">
    <location>
        <position position="238"/>
    </location>
    <ligand>
        <name>substrate</name>
    </ligand>
</feature>
<feature type="binding site" evidence="1">
    <location>
        <position position="370"/>
    </location>
    <ligand>
        <name>Mg(2+)</name>
        <dbReference type="ChEBI" id="CHEBI:18420"/>
    </ligand>
</feature>
<feature type="binding site" evidence="1">
    <location>
        <position position="372"/>
    </location>
    <ligand>
        <name>Mg(2+)</name>
        <dbReference type="ChEBI" id="CHEBI:18420"/>
    </ligand>
</feature>
<feature type="binding site" evidence="2">
    <location>
        <position position="457"/>
    </location>
    <ligand>
        <name>substrate</name>
    </ligand>
</feature>
<feature type="sequence conflict" description="In Ref. 2; AHJ59321." ref="2">
    <original>I</original>
    <variation>L</variation>
    <location>
        <position position="56"/>
    </location>
</feature>
<feature type="sequence conflict" description="In Ref. 2; AHJ59321." ref="2">
    <original>I</original>
    <variation>M</variation>
    <location>
        <position position="250"/>
    </location>
</feature>
<feature type="sequence conflict" description="In Ref. 2; AHJ59321." ref="2">
    <original>T</original>
    <variation>A</variation>
    <location>
        <position position="597"/>
    </location>
</feature>
<feature type="sequence conflict" description="In Ref. 2; AHJ59321." ref="2">
    <original>DKRA</original>
    <variation>EKRD</variation>
    <location>
        <begin position="602"/>
        <end position="605"/>
    </location>
</feature>
<feature type="sequence conflict" description="In Ref. 2; AHJ59321." ref="2">
    <original>G</original>
    <variation>E</variation>
    <location>
        <position position="611"/>
    </location>
</feature>
<feature type="sequence conflict" description="In Ref. 2; AHJ59321." ref="2">
    <original>N</original>
    <variation>S</variation>
    <location>
        <position position="733"/>
    </location>
</feature>
<evidence type="ECO:0000250" key="1">
    <source>
        <dbReference type="UniProtKB" id="C7BKP9"/>
    </source>
</evidence>
<evidence type="ECO:0000250" key="2">
    <source>
        <dbReference type="UniProtKB" id="Q38802"/>
    </source>
</evidence>
<evidence type="ECO:0000250" key="3">
    <source>
        <dbReference type="UniProtKB" id="Q40577"/>
    </source>
</evidence>
<evidence type="ECO:0000255" key="4"/>
<evidence type="ECO:0000269" key="5">
    <source>
    </source>
</evidence>
<evidence type="ECO:0000269" key="6">
    <source>
    </source>
</evidence>
<evidence type="ECO:0000269" key="7">
    <source>
    </source>
</evidence>
<evidence type="ECO:0000269" key="8">
    <source>
    </source>
</evidence>
<evidence type="ECO:0000303" key="9">
    <source>
    </source>
</evidence>
<evidence type="ECO:0000303" key="10">
    <source>
    </source>
</evidence>
<evidence type="ECO:0000305" key="11"/>
<protein>
    <recommendedName>
        <fullName evidence="11">Copalyl diphosphate synthase CPS1, chloroplastic</fullName>
        <shortName evidence="10">Copalyl diphosphate synthase 1</shortName>
        <shortName evidence="9">SmCPS</shortName>
        <shortName evidence="10">SmCPS1</shortName>
        <ecNumber evidence="5">5.5.1.12</ecNumber>
    </recommendedName>
</protein>
<dbReference type="EC" id="5.5.1.12" evidence="5"/>
<dbReference type="EMBL" id="EU003997">
    <property type="protein sequence ID" value="ABV57835.1"/>
    <property type="molecule type" value="mRNA"/>
</dbReference>
<dbReference type="EMBL" id="KC814639">
    <property type="protein sequence ID" value="AHJ59321.1"/>
    <property type="molecule type" value="mRNA"/>
</dbReference>
<dbReference type="SMR" id="B8PQ84"/>
<dbReference type="BRENDA" id="5.5.1.12">
    <property type="organism ID" value="9850"/>
</dbReference>
<dbReference type="UniPathway" id="UPA00213"/>
<dbReference type="GO" id="GO:0009507">
    <property type="term" value="C:chloroplast"/>
    <property type="evidence" value="ECO:0007669"/>
    <property type="project" value="UniProtKB-SubCell"/>
</dbReference>
<dbReference type="GO" id="GO:0050559">
    <property type="term" value="F:copalyl diphosphate synthase activity"/>
    <property type="evidence" value="ECO:0007669"/>
    <property type="project" value="UniProtKB-EC"/>
</dbReference>
<dbReference type="GO" id="GO:0000287">
    <property type="term" value="F:magnesium ion binding"/>
    <property type="evidence" value="ECO:0007669"/>
    <property type="project" value="TreeGrafter"/>
</dbReference>
<dbReference type="GO" id="GO:0010333">
    <property type="term" value="F:terpene synthase activity"/>
    <property type="evidence" value="ECO:0007669"/>
    <property type="project" value="InterPro"/>
</dbReference>
<dbReference type="GO" id="GO:0009686">
    <property type="term" value="P:gibberellin biosynthetic process"/>
    <property type="evidence" value="ECO:0007669"/>
    <property type="project" value="TreeGrafter"/>
</dbReference>
<dbReference type="FunFam" id="1.50.10.160:FF:000001">
    <property type="entry name" value="Ent-copalyl diphosphate synthase"/>
    <property type="match status" value="1"/>
</dbReference>
<dbReference type="FunFam" id="1.50.10.130:FF:000002">
    <property type="entry name" value="Ent-copalyl diphosphate synthase, chloroplastic"/>
    <property type="match status" value="1"/>
</dbReference>
<dbReference type="Gene3D" id="1.50.10.160">
    <property type="match status" value="1"/>
</dbReference>
<dbReference type="Gene3D" id="1.10.600.10">
    <property type="entry name" value="Farnesyl Diphosphate Synthase"/>
    <property type="match status" value="1"/>
</dbReference>
<dbReference type="Gene3D" id="1.50.10.130">
    <property type="entry name" value="Terpene synthase, N-terminal domain"/>
    <property type="match status" value="1"/>
</dbReference>
<dbReference type="InterPro" id="IPR008949">
    <property type="entry name" value="Isoprenoid_synthase_dom_sf"/>
</dbReference>
<dbReference type="InterPro" id="IPR001906">
    <property type="entry name" value="Terpene_synth_N"/>
</dbReference>
<dbReference type="InterPro" id="IPR036965">
    <property type="entry name" value="Terpene_synth_N_sf"/>
</dbReference>
<dbReference type="InterPro" id="IPR050148">
    <property type="entry name" value="Terpene_synthase-like"/>
</dbReference>
<dbReference type="InterPro" id="IPR008930">
    <property type="entry name" value="Terpenoid_cyclase/PrenylTrfase"/>
</dbReference>
<dbReference type="PANTHER" id="PTHR31739:SF30">
    <property type="entry name" value="COPAL-8-OL DIPHOSPHATE HYDRATASE, CHLOROPLASTIC"/>
    <property type="match status" value="1"/>
</dbReference>
<dbReference type="PANTHER" id="PTHR31739">
    <property type="entry name" value="ENT-COPALYL DIPHOSPHATE SYNTHASE, CHLOROPLASTIC"/>
    <property type="match status" value="1"/>
</dbReference>
<dbReference type="Pfam" id="PF01397">
    <property type="entry name" value="Terpene_synth"/>
    <property type="match status" value="1"/>
</dbReference>
<dbReference type="SFLD" id="SFLDG01014">
    <property type="entry name" value="Terpene_Cyclase_Like_1_N-term"/>
    <property type="match status" value="1"/>
</dbReference>
<dbReference type="SFLD" id="SFLDG01605">
    <property type="entry name" value="Terpene_Cyclase_Like_1_N-term"/>
    <property type="match status" value="1"/>
</dbReference>
<dbReference type="SUPFAM" id="SSF48239">
    <property type="entry name" value="Terpenoid cyclases/Protein prenyltransferases"/>
    <property type="match status" value="2"/>
</dbReference>
<dbReference type="SUPFAM" id="SSF48576">
    <property type="entry name" value="Terpenoid synthases"/>
    <property type="match status" value="1"/>
</dbReference>
<sequence length="793" mass="90483">MASLSSTILSRSPAARRRITPASAKLHRPECFATSAWMGSSSKNLSLSYQLNHKKISVATVDAPQVHDHDGTTVHQGHDAVKNIEDPIEYIRTLLRTTGDGRISVSPYDTAWVAMIKDVEGRDGPQFPSSLEWIVQNQLEDGSWGDQKLFCVYDRLVNTIACVVALRSWNVHAHKVKRGVTYIKENVDKLMEGNEEHMTCGFEVVFPALLQKAKSLGIEDLPYDSPAVQEVYHVREQKLKRIPLEIMHKIPTSLLFSLEGLENLDWDKLLKLQSADGSFLTSPSSTAFAFMQTKDEKCYQFIKNTIDTFNGGAPHTYPVDVFGRLWAIDRLQRLGISRFFEPEIADCLSHIHKFWTDKGVFSGRESEFCDIDDTSMGMRLMRMHGYDVDPNVLRNFKQKDGKFSCYGGQMIESPSPIYNLYRASQLRFPGEEILEDAKRFAYDFLKEKLANNQILDKWVISKHLPDEIKLGLEMPWLATLPRVEAKYYIQYYAGSGDVWIGKTLYRMPEISNDTYHDLAKTDFKRCQAKHQFEWLYMQEWYESCGIEEFGISRKDLLLSYFLATASIFELERTNERIAWAKSQIIAKMITSFFNKETTSEEDKRALLNELGNINGLNDTNGAGREGGAGSIALATLTQFLEGFDRYTRHQLKNAWSVWLTQLQHGEADDAELLTNTLNICAGHIAFREEILAHNEYKALSNLTSKICRQLSFIQSEKEMGVEGEIAAKSSIKNKELEEDMQMLVKLVLEKYGGIDRNIKKAFLAVAKTYYYRAYHAADTIDTHMFKVLFEPVA</sequence>